<keyword id="KW-0002">3D-structure</keyword>
<keyword id="KW-0249">Electron transport</keyword>
<keyword id="KW-0472">Membrane</keyword>
<keyword id="KW-0602">Photosynthesis</keyword>
<keyword id="KW-1185">Reference proteome</keyword>
<keyword id="KW-0793">Thylakoid</keyword>
<keyword id="KW-0812">Transmembrane</keyword>
<keyword id="KW-1133">Transmembrane helix</keyword>
<keyword id="KW-0813">Transport</keyword>
<name>PETG_NOSS1</name>
<gene>
    <name evidence="1" type="primary">petG</name>
    <name type="ordered locus">asr1366</name>
</gene>
<comment type="function">
    <text evidence="1">Component of the cytochrome b6-f complex, which mediates electron transfer between photosystem II (PSII) and photosystem I (PSI), cyclic electron flow around PSI, and state transitions. PetG is required for either the stability or assembly of the cytochrome b6-f complex.</text>
</comment>
<comment type="subunit">
    <text evidence="1">The 4 large subunits of the cytochrome b6-f complex are cytochrome b6, subunit IV (17 kDa polypeptide, PetD), cytochrome f and the Rieske protein, while the 4 small subunits are PetG, PetL, PetM and PetN. The complex functions as a dimer.</text>
</comment>
<comment type="subcellular location">
    <subcellularLocation>
        <location evidence="1">Cellular thylakoid membrane</location>
        <topology evidence="1">Single-pass membrane protein</topology>
    </subcellularLocation>
</comment>
<comment type="similarity">
    <text evidence="1">Belongs to the PetG family.</text>
</comment>
<evidence type="ECO:0000255" key="1">
    <source>
        <dbReference type="HAMAP-Rule" id="MF_00432"/>
    </source>
</evidence>
<evidence type="ECO:0007829" key="2">
    <source>
        <dbReference type="PDB" id="4OGQ"/>
    </source>
</evidence>
<feature type="chain" id="PRO_0000216408" description="Cytochrome b6-f complex subunit 5">
    <location>
        <begin position="1"/>
        <end position="37"/>
    </location>
</feature>
<feature type="transmembrane region" description="Helical" evidence="1">
    <location>
        <begin position="5"/>
        <end position="25"/>
    </location>
</feature>
<feature type="helix" evidence="2">
    <location>
        <begin position="4"/>
        <end position="30"/>
    </location>
</feature>
<accession>P58246</accession>
<protein>
    <recommendedName>
        <fullName evidence="1">Cytochrome b6-f complex subunit 5</fullName>
    </recommendedName>
    <alternativeName>
        <fullName evidence="1">Cytochrome b6-f complex subunit PetG</fullName>
    </alternativeName>
    <alternativeName>
        <fullName evidence="1">Cytochrome b6-f complex subunit V</fullName>
    </alternativeName>
</protein>
<sequence length="37" mass="3995">MVEPLLSGIVLGLIVVTLAGLFYAAYKQYKRPNELGG</sequence>
<dbReference type="EMBL" id="AJ319650">
    <property type="protein sequence ID" value="CAC39610.1"/>
    <property type="molecule type" value="Genomic_DNA"/>
</dbReference>
<dbReference type="EMBL" id="BA000019">
    <property type="protein sequence ID" value="BAB73323.1"/>
    <property type="molecule type" value="Genomic_DNA"/>
</dbReference>
<dbReference type="PIR" id="AC1977">
    <property type="entry name" value="AC1977"/>
</dbReference>
<dbReference type="RefSeq" id="WP_010995538.1">
    <property type="nucleotide sequence ID" value="NZ_RSCN01000029.1"/>
</dbReference>
<dbReference type="PDB" id="2ZT9">
    <property type="method" value="X-ray"/>
    <property type="resolution" value="3.00 A"/>
    <property type="chains" value="G=1-37"/>
</dbReference>
<dbReference type="PDB" id="4H44">
    <property type="method" value="X-ray"/>
    <property type="resolution" value="2.70 A"/>
    <property type="chains" value="G=1-37"/>
</dbReference>
<dbReference type="PDB" id="4OGQ">
    <property type="method" value="X-ray"/>
    <property type="resolution" value="2.50 A"/>
    <property type="chains" value="G=1-37"/>
</dbReference>
<dbReference type="PDBsum" id="2ZT9"/>
<dbReference type="PDBsum" id="4H44"/>
<dbReference type="PDBsum" id="4OGQ"/>
<dbReference type="SMR" id="P58246"/>
<dbReference type="DIP" id="DIP-61006N"/>
<dbReference type="IntAct" id="P58246">
    <property type="interactions" value="1"/>
</dbReference>
<dbReference type="STRING" id="103690.gene:10493381"/>
<dbReference type="TCDB" id="3.D.3.5.6">
    <property type="family name" value="the proton-translocating quinol:cytochrome c reductase (qcr) superfamily"/>
</dbReference>
<dbReference type="KEGG" id="ana:asr1366"/>
<dbReference type="eggNOG" id="ENOG5033BE9">
    <property type="taxonomic scope" value="Bacteria"/>
</dbReference>
<dbReference type="Proteomes" id="UP000002483">
    <property type="component" value="Chromosome"/>
</dbReference>
<dbReference type="GO" id="GO:0009512">
    <property type="term" value="C:cytochrome b6f complex"/>
    <property type="evidence" value="ECO:0007669"/>
    <property type="project" value="InterPro"/>
</dbReference>
<dbReference type="GO" id="GO:0031676">
    <property type="term" value="C:plasma membrane-derived thylakoid membrane"/>
    <property type="evidence" value="ECO:0007669"/>
    <property type="project" value="UniProtKB-SubCell"/>
</dbReference>
<dbReference type="GO" id="GO:0045158">
    <property type="term" value="F:electron transporter, transferring electrons within cytochrome b6/f complex of photosystem II activity"/>
    <property type="evidence" value="ECO:0007669"/>
    <property type="project" value="UniProtKB-UniRule"/>
</dbReference>
<dbReference type="GO" id="GO:0017004">
    <property type="term" value="P:cytochrome complex assembly"/>
    <property type="evidence" value="ECO:0007669"/>
    <property type="project" value="UniProtKB-UniRule"/>
</dbReference>
<dbReference type="GO" id="GO:0015979">
    <property type="term" value="P:photosynthesis"/>
    <property type="evidence" value="ECO:0007669"/>
    <property type="project" value="UniProtKB-KW"/>
</dbReference>
<dbReference type="HAMAP" id="MF_00432">
    <property type="entry name" value="Cytb6_f_PetG"/>
    <property type="match status" value="1"/>
</dbReference>
<dbReference type="InterPro" id="IPR003683">
    <property type="entry name" value="Cyt_6/f_cplx_su5"/>
</dbReference>
<dbReference type="InterPro" id="IPR036099">
    <property type="entry name" value="Cyt_6/f_cplx_su5_sf"/>
</dbReference>
<dbReference type="NCBIfam" id="NF001907">
    <property type="entry name" value="PRK00665.1"/>
    <property type="match status" value="1"/>
</dbReference>
<dbReference type="Pfam" id="PF02529">
    <property type="entry name" value="PetG"/>
    <property type="match status" value="1"/>
</dbReference>
<dbReference type="PIRSF" id="PIRSF000034">
    <property type="entry name" value="Cyt_b6-f_V"/>
    <property type="match status" value="1"/>
</dbReference>
<dbReference type="SUPFAM" id="SSF103446">
    <property type="entry name" value="PetG subunit of the cytochrome b6f complex"/>
    <property type="match status" value="1"/>
</dbReference>
<organism>
    <name type="scientific">Nostoc sp. (strain PCC 7120 / SAG 25.82 / UTEX 2576)</name>
    <dbReference type="NCBI Taxonomy" id="103690"/>
    <lineage>
        <taxon>Bacteria</taxon>
        <taxon>Bacillati</taxon>
        <taxon>Cyanobacteriota</taxon>
        <taxon>Cyanophyceae</taxon>
        <taxon>Nostocales</taxon>
        <taxon>Nostocaceae</taxon>
        <taxon>Nostoc</taxon>
    </lineage>
</organism>
<reference key="1">
    <citation type="submission" date="2001-05" db="EMBL/GenBank/DDBJ databases">
        <title>b6f complex of Anabaena sp.</title>
        <authorList>
            <person name="Arnold M."/>
        </authorList>
    </citation>
    <scope>NUCLEOTIDE SEQUENCE [GENOMIC DNA]</scope>
</reference>
<reference key="2">
    <citation type="journal article" date="2001" name="DNA Res.">
        <title>Complete genomic sequence of the filamentous nitrogen-fixing cyanobacterium Anabaena sp. strain PCC 7120.</title>
        <authorList>
            <person name="Kaneko T."/>
            <person name="Nakamura Y."/>
            <person name="Wolk C.P."/>
            <person name="Kuritz T."/>
            <person name="Sasamoto S."/>
            <person name="Watanabe A."/>
            <person name="Iriguchi M."/>
            <person name="Ishikawa A."/>
            <person name="Kawashima K."/>
            <person name="Kimura T."/>
            <person name="Kishida Y."/>
            <person name="Kohara M."/>
            <person name="Matsumoto M."/>
            <person name="Matsuno A."/>
            <person name="Muraki A."/>
            <person name="Nakazaki N."/>
            <person name="Shimpo S."/>
            <person name="Sugimoto M."/>
            <person name="Takazawa M."/>
            <person name="Yamada M."/>
            <person name="Yasuda M."/>
            <person name="Tabata S."/>
        </authorList>
    </citation>
    <scope>NUCLEOTIDE SEQUENCE [LARGE SCALE GENOMIC DNA]</scope>
    <source>
        <strain>PCC 7120 / SAG 25.82 / UTEX 2576</strain>
    </source>
</reference>
<proteinExistence type="evidence at protein level"/>